<keyword id="KW-1185">Reference proteome</keyword>
<gene>
    <name type="ordered locus">YBR182C-A</name>
</gene>
<protein>
    <recommendedName>
        <fullName>Uncharacterized protein YBR182C-A</fullName>
    </recommendedName>
</protein>
<sequence>MKIFTLYTMIQQYFFDNGGVYSIKNFYSAVPKEKMNIILVSLDCELQKLALKLSKKTSGTHTTH</sequence>
<name>YB182_YEAST</name>
<feature type="chain" id="PRO_0000248437" description="Uncharacterized protein YBR182C-A">
    <location>
        <begin position="1"/>
        <end position="64"/>
    </location>
</feature>
<reference key="1">
    <citation type="journal article" date="1994" name="EMBO J.">
        <title>Complete DNA sequence of yeast chromosome II.</title>
        <authorList>
            <person name="Feldmann H."/>
            <person name="Aigle M."/>
            <person name="Aljinovic G."/>
            <person name="Andre B."/>
            <person name="Baclet M.C."/>
            <person name="Barthe C."/>
            <person name="Baur A."/>
            <person name="Becam A.-M."/>
            <person name="Biteau N."/>
            <person name="Boles E."/>
            <person name="Brandt T."/>
            <person name="Brendel M."/>
            <person name="Brueckner M."/>
            <person name="Bussereau F."/>
            <person name="Christiansen C."/>
            <person name="Contreras R."/>
            <person name="Crouzet M."/>
            <person name="Cziepluch C."/>
            <person name="Demolis N."/>
            <person name="Delaveau T."/>
            <person name="Doignon F."/>
            <person name="Domdey H."/>
            <person name="Duesterhus S."/>
            <person name="Dubois E."/>
            <person name="Dujon B."/>
            <person name="El Bakkoury M."/>
            <person name="Entian K.-D."/>
            <person name="Feuermann M."/>
            <person name="Fiers W."/>
            <person name="Fobo G.M."/>
            <person name="Fritz C."/>
            <person name="Gassenhuber J."/>
            <person name="Glansdorff N."/>
            <person name="Goffeau A."/>
            <person name="Grivell L.A."/>
            <person name="de Haan M."/>
            <person name="Hein C."/>
            <person name="Herbert C.J."/>
            <person name="Hollenberg C.P."/>
            <person name="Holmstroem K."/>
            <person name="Jacq C."/>
            <person name="Jacquet M."/>
            <person name="Jauniaux J.-C."/>
            <person name="Jonniaux J.-L."/>
            <person name="Kallesoee T."/>
            <person name="Kiesau P."/>
            <person name="Kirchrath L."/>
            <person name="Koetter P."/>
            <person name="Korol S."/>
            <person name="Liebl S."/>
            <person name="Logghe M."/>
            <person name="Lohan A.J.E."/>
            <person name="Louis E.J."/>
            <person name="Li Z.Y."/>
            <person name="Maat M.J."/>
            <person name="Mallet L."/>
            <person name="Mannhaupt G."/>
            <person name="Messenguy F."/>
            <person name="Miosga T."/>
            <person name="Molemans F."/>
            <person name="Mueller S."/>
            <person name="Nasr F."/>
            <person name="Obermaier B."/>
            <person name="Perea J."/>
            <person name="Pierard A."/>
            <person name="Piravandi E."/>
            <person name="Pohl F.M."/>
            <person name="Pohl T.M."/>
            <person name="Potier S."/>
            <person name="Proft M."/>
            <person name="Purnelle B."/>
            <person name="Ramezani Rad M."/>
            <person name="Rieger M."/>
            <person name="Rose M."/>
            <person name="Schaaff-Gerstenschlaeger I."/>
            <person name="Scherens B."/>
            <person name="Schwarzlose C."/>
            <person name="Skala J."/>
            <person name="Slonimski P.P."/>
            <person name="Smits P.H.M."/>
            <person name="Souciet J.-L."/>
            <person name="Steensma H.Y."/>
            <person name="Stucka R."/>
            <person name="Urrestarazu L.A."/>
            <person name="van der Aart Q.J.M."/>
            <person name="Van Dyck L."/>
            <person name="Vassarotti A."/>
            <person name="Vetter I."/>
            <person name="Vierendeels F."/>
            <person name="Vissers S."/>
            <person name="Wagner G."/>
            <person name="de Wergifosse P."/>
            <person name="Wolfe K.H."/>
            <person name="Zagulski M."/>
            <person name="Zimmermann F.K."/>
            <person name="Mewes H.-W."/>
            <person name="Kleine K."/>
        </authorList>
    </citation>
    <scope>NUCLEOTIDE SEQUENCE [LARGE SCALE GENOMIC DNA]</scope>
    <source>
        <strain>ATCC 204508 / S288c</strain>
    </source>
</reference>
<reference key="2">
    <citation type="journal article" date="2014" name="G3 (Bethesda)">
        <title>The reference genome sequence of Saccharomyces cerevisiae: Then and now.</title>
        <authorList>
            <person name="Engel S.R."/>
            <person name="Dietrich F.S."/>
            <person name="Fisk D.G."/>
            <person name="Binkley G."/>
            <person name="Balakrishnan R."/>
            <person name="Costanzo M.C."/>
            <person name="Dwight S.S."/>
            <person name="Hitz B.C."/>
            <person name="Karra K."/>
            <person name="Nash R.S."/>
            <person name="Weng S."/>
            <person name="Wong E.D."/>
            <person name="Lloyd P."/>
            <person name="Skrzypek M.S."/>
            <person name="Miyasato S.R."/>
            <person name="Simison M."/>
            <person name="Cherry J.M."/>
        </authorList>
    </citation>
    <scope>GENOME REANNOTATION</scope>
    <source>
        <strain>ATCC 204508 / S288c</strain>
    </source>
</reference>
<reference key="3">
    <citation type="journal article" date="2002" name="Nat. Biotechnol.">
        <title>An integrated approach for finding overlooked genes in yeast.</title>
        <authorList>
            <person name="Kumar A."/>
            <person name="Harrison P.M."/>
            <person name="Cheung K.-H."/>
            <person name="Lan N."/>
            <person name="Echols N."/>
            <person name="Bertone P."/>
            <person name="Miller P."/>
            <person name="Gerstein M.B."/>
            <person name="Snyder M."/>
        </authorList>
    </citation>
    <scope>NUCLEOTIDE SEQUENCE [GENOMIC DNA]</scope>
</reference>
<accession>Q8TGU6</accession>
<accession>D6VQH7</accession>
<proteinExistence type="predicted"/>
<organism>
    <name type="scientific">Saccharomyces cerevisiae (strain ATCC 204508 / S288c)</name>
    <name type="common">Baker's yeast</name>
    <dbReference type="NCBI Taxonomy" id="559292"/>
    <lineage>
        <taxon>Eukaryota</taxon>
        <taxon>Fungi</taxon>
        <taxon>Dikarya</taxon>
        <taxon>Ascomycota</taxon>
        <taxon>Saccharomycotina</taxon>
        <taxon>Saccharomycetes</taxon>
        <taxon>Saccharomycetales</taxon>
        <taxon>Saccharomycetaceae</taxon>
        <taxon>Saccharomyces</taxon>
    </lineage>
</organism>
<dbReference type="EMBL" id="Z36052">
    <property type="status" value="NOT_ANNOTATED_CDS"/>
    <property type="molecule type" value="Genomic_DNA"/>
</dbReference>
<dbReference type="EMBL" id="AF479889">
    <property type="protein sequence ID" value="AAL79202.1"/>
    <property type="molecule type" value="Genomic_DNA"/>
</dbReference>
<dbReference type="EMBL" id="BK006936">
    <property type="protein sequence ID" value="DAA07297.1"/>
    <property type="molecule type" value="Genomic_DNA"/>
</dbReference>
<dbReference type="RefSeq" id="NP_878050.1">
    <property type="nucleotide sequence ID" value="NM_001184586.1"/>
</dbReference>
<dbReference type="SMR" id="Q8TGU6"/>
<dbReference type="BioGRID" id="36988">
    <property type="interactions" value="18"/>
</dbReference>
<dbReference type="FunCoup" id="Q8TGU6">
    <property type="interactions" value="15"/>
</dbReference>
<dbReference type="STRING" id="4932.YBR182C-A"/>
<dbReference type="PaxDb" id="4932-YBR182C-A"/>
<dbReference type="EnsemblFungi" id="YBR182C-A_mRNA">
    <property type="protein sequence ID" value="YBR182C-A"/>
    <property type="gene ID" value="YBR182C-A"/>
</dbReference>
<dbReference type="GeneID" id="1466446"/>
<dbReference type="KEGG" id="sce:YBR182C-A"/>
<dbReference type="AGR" id="SGD:S000028603"/>
<dbReference type="SGD" id="S000028603">
    <property type="gene designation" value="YBR182C-A"/>
</dbReference>
<dbReference type="VEuPathDB" id="FungiDB:YBR182C-A"/>
<dbReference type="HOGENOM" id="CLU_2869381_0_0_1"/>
<dbReference type="InParanoid" id="Q8TGU6"/>
<dbReference type="BioCyc" id="YEAST:G3O-29264-MONOMER"/>
<dbReference type="BioGRID-ORCS" id="1466446">
    <property type="hits" value="0 hits in 10 CRISPR screens"/>
</dbReference>
<dbReference type="PRO" id="PR:Q8TGU6"/>
<dbReference type="Proteomes" id="UP000002311">
    <property type="component" value="Chromosome II"/>
</dbReference>
<dbReference type="RNAct" id="Q8TGU6">
    <property type="molecule type" value="protein"/>
</dbReference>